<accession>A4XVK6</accession>
<comment type="function">
    <text evidence="1">Catalyzes a salvage reaction resulting in the formation of AMP, that is energically less costly than de novo synthesis.</text>
</comment>
<comment type="catalytic activity">
    <reaction evidence="1">
        <text>AMP + diphosphate = 5-phospho-alpha-D-ribose 1-diphosphate + adenine</text>
        <dbReference type="Rhea" id="RHEA:16609"/>
        <dbReference type="ChEBI" id="CHEBI:16708"/>
        <dbReference type="ChEBI" id="CHEBI:33019"/>
        <dbReference type="ChEBI" id="CHEBI:58017"/>
        <dbReference type="ChEBI" id="CHEBI:456215"/>
        <dbReference type="EC" id="2.4.2.7"/>
    </reaction>
</comment>
<comment type="pathway">
    <text evidence="1">Purine metabolism; AMP biosynthesis via salvage pathway; AMP from adenine: step 1/1.</text>
</comment>
<comment type="subunit">
    <text evidence="1">Homodimer.</text>
</comment>
<comment type="subcellular location">
    <subcellularLocation>
        <location evidence="1">Cytoplasm</location>
    </subcellularLocation>
</comment>
<comment type="similarity">
    <text evidence="1">Belongs to the purine/pyrimidine phosphoribosyltransferase family.</text>
</comment>
<organism>
    <name type="scientific">Ectopseudomonas mendocina (strain ymp)</name>
    <name type="common">Pseudomonas mendocina</name>
    <dbReference type="NCBI Taxonomy" id="399739"/>
    <lineage>
        <taxon>Bacteria</taxon>
        <taxon>Pseudomonadati</taxon>
        <taxon>Pseudomonadota</taxon>
        <taxon>Gammaproteobacteria</taxon>
        <taxon>Pseudomonadales</taxon>
        <taxon>Pseudomonadaceae</taxon>
        <taxon>Ectopseudomonas</taxon>
    </lineage>
</organism>
<feature type="chain" id="PRO_1000000327" description="Adenine phosphoribosyltransferase">
    <location>
        <begin position="1"/>
        <end position="182"/>
    </location>
</feature>
<keyword id="KW-0963">Cytoplasm</keyword>
<keyword id="KW-0328">Glycosyltransferase</keyword>
<keyword id="KW-0660">Purine salvage</keyword>
<keyword id="KW-0808">Transferase</keyword>
<gene>
    <name evidence="1" type="primary">apt</name>
    <name type="ordered locus">Pmen_2616</name>
</gene>
<name>APT_ECTM1</name>
<protein>
    <recommendedName>
        <fullName evidence="1">Adenine phosphoribosyltransferase</fullName>
        <shortName evidence="1">APRT</shortName>
        <ecNumber evidence="1">2.4.2.7</ecNumber>
    </recommendedName>
</protein>
<reference key="1">
    <citation type="submission" date="2007-04" db="EMBL/GenBank/DDBJ databases">
        <title>Complete sequence of Pseudomonas mendocina ymp.</title>
        <authorList>
            <consortium name="US DOE Joint Genome Institute"/>
            <person name="Copeland A."/>
            <person name="Lucas S."/>
            <person name="Lapidus A."/>
            <person name="Barry K."/>
            <person name="Glavina del Rio T."/>
            <person name="Dalin E."/>
            <person name="Tice H."/>
            <person name="Pitluck S."/>
            <person name="Kiss H."/>
            <person name="Brettin T."/>
            <person name="Detter J.C."/>
            <person name="Bruce D."/>
            <person name="Han C."/>
            <person name="Schmutz J."/>
            <person name="Larimer F."/>
            <person name="Land M."/>
            <person name="Hauser L."/>
            <person name="Kyrpides N."/>
            <person name="Mikhailova N."/>
            <person name="Hersman L."/>
            <person name="Dubois J."/>
            <person name="Maurice P."/>
            <person name="Richardson P."/>
        </authorList>
    </citation>
    <scope>NUCLEOTIDE SEQUENCE [LARGE SCALE GENOMIC DNA]</scope>
    <source>
        <strain>ymp</strain>
    </source>
</reference>
<evidence type="ECO:0000255" key="1">
    <source>
        <dbReference type="HAMAP-Rule" id="MF_00004"/>
    </source>
</evidence>
<sequence>MIFDEFSIKTLIRPVPDFPKPGVVFRDITPLFQSPRALRMVADSFIQRYVEAEFSHIGAMDARGFLIGSIIAYELNKPLILFRKQGKLPADVLSESYQTEYGEAFLEVHSDSLCEGDSVLIFDDLIATGGTLIAAANLVRRMRASVFEAAAIIDLPELGGSQKLQDAAIPTFTLTAFALDDR</sequence>
<dbReference type="EC" id="2.4.2.7" evidence="1"/>
<dbReference type="EMBL" id="CP000680">
    <property type="protein sequence ID" value="ABP85372.1"/>
    <property type="molecule type" value="Genomic_DNA"/>
</dbReference>
<dbReference type="SMR" id="A4XVK6"/>
<dbReference type="STRING" id="399739.Pmen_2616"/>
<dbReference type="KEGG" id="pmy:Pmen_2616"/>
<dbReference type="PATRIC" id="fig|399739.8.peg.2644"/>
<dbReference type="eggNOG" id="COG0503">
    <property type="taxonomic scope" value="Bacteria"/>
</dbReference>
<dbReference type="HOGENOM" id="CLU_063339_3_0_6"/>
<dbReference type="OrthoDB" id="9803963at2"/>
<dbReference type="UniPathway" id="UPA00588">
    <property type="reaction ID" value="UER00646"/>
</dbReference>
<dbReference type="GO" id="GO:0005829">
    <property type="term" value="C:cytosol"/>
    <property type="evidence" value="ECO:0007669"/>
    <property type="project" value="TreeGrafter"/>
</dbReference>
<dbReference type="GO" id="GO:0003999">
    <property type="term" value="F:adenine phosphoribosyltransferase activity"/>
    <property type="evidence" value="ECO:0007669"/>
    <property type="project" value="UniProtKB-UniRule"/>
</dbReference>
<dbReference type="GO" id="GO:0006168">
    <property type="term" value="P:adenine salvage"/>
    <property type="evidence" value="ECO:0007669"/>
    <property type="project" value="InterPro"/>
</dbReference>
<dbReference type="GO" id="GO:0044209">
    <property type="term" value="P:AMP salvage"/>
    <property type="evidence" value="ECO:0007669"/>
    <property type="project" value="UniProtKB-UniRule"/>
</dbReference>
<dbReference type="GO" id="GO:0006166">
    <property type="term" value="P:purine ribonucleoside salvage"/>
    <property type="evidence" value="ECO:0007669"/>
    <property type="project" value="UniProtKB-KW"/>
</dbReference>
<dbReference type="CDD" id="cd06223">
    <property type="entry name" value="PRTases_typeI"/>
    <property type="match status" value="1"/>
</dbReference>
<dbReference type="FunFam" id="3.40.50.2020:FF:000021">
    <property type="entry name" value="Adenine phosphoribosyltransferase"/>
    <property type="match status" value="1"/>
</dbReference>
<dbReference type="Gene3D" id="3.40.50.2020">
    <property type="match status" value="1"/>
</dbReference>
<dbReference type="HAMAP" id="MF_00004">
    <property type="entry name" value="Aden_phosphoribosyltr"/>
    <property type="match status" value="1"/>
</dbReference>
<dbReference type="InterPro" id="IPR005764">
    <property type="entry name" value="Ade_phspho_trans"/>
</dbReference>
<dbReference type="InterPro" id="IPR050120">
    <property type="entry name" value="Adenine_PRTase"/>
</dbReference>
<dbReference type="InterPro" id="IPR000836">
    <property type="entry name" value="PRibTrfase_dom"/>
</dbReference>
<dbReference type="InterPro" id="IPR029057">
    <property type="entry name" value="PRTase-like"/>
</dbReference>
<dbReference type="NCBIfam" id="TIGR01090">
    <property type="entry name" value="apt"/>
    <property type="match status" value="1"/>
</dbReference>
<dbReference type="NCBIfam" id="NF002634">
    <property type="entry name" value="PRK02304.1-3"/>
    <property type="match status" value="1"/>
</dbReference>
<dbReference type="NCBIfam" id="NF002636">
    <property type="entry name" value="PRK02304.1-5"/>
    <property type="match status" value="1"/>
</dbReference>
<dbReference type="PANTHER" id="PTHR11776">
    <property type="entry name" value="ADENINE PHOSPHORIBOSYLTRANSFERASE"/>
    <property type="match status" value="1"/>
</dbReference>
<dbReference type="PANTHER" id="PTHR11776:SF7">
    <property type="entry name" value="PHOSPHORIBOSYLTRANSFERASE DOMAIN-CONTAINING PROTEIN"/>
    <property type="match status" value="1"/>
</dbReference>
<dbReference type="Pfam" id="PF00156">
    <property type="entry name" value="Pribosyltran"/>
    <property type="match status" value="1"/>
</dbReference>
<dbReference type="SUPFAM" id="SSF53271">
    <property type="entry name" value="PRTase-like"/>
    <property type="match status" value="1"/>
</dbReference>
<dbReference type="PROSITE" id="PS00103">
    <property type="entry name" value="PUR_PYR_PR_TRANSFER"/>
    <property type="match status" value="1"/>
</dbReference>
<proteinExistence type="inferred from homology"/>